<organism>
    <name type="scientific">Influenza A virus (strain A/Guinea fowl/Hong Kong/38/2002 H5N1 genotype X0)</name>
    <dbReference type="NCBI Taxonomy" id="284208"/>
    <lineage>
        <taxon>Viruses</taxon>
        <taxon>Riboviria</taxon>
        <taxon>Orthornavirae</taxon>
        <taxon>Negarnaviricota</taxon>
        <taxon>Polyploviricotina</taxon>
        <taxon>Insthoviricetes</taxon>
        <taxon>Articulavirales</taxon>
        <taxon>Orthomyxoviridae</taxon>
        <taxon>Alphainfluenzavirus</taxon>
        <taxon>Alphainfluenzavirus influenzae</taxon>
        <taxon>Influenza A virus</taxon>
    </lineage>
</organism>
<reference key="1">
    <citation type="journal article" date="2004" name="Nature">
        <title>Genesis of a highly pathogenic and potentially pandemic H5N1 influenza virus in eastern Asia.</title>
        <authorList>
            <person name="Li K.S."/>
            <person name="Guan Y."/>
            <person name="Wang J."/>
            <person name="Smith G.J.D."/>
            <person name="Xu K.M."/>
            <person name="Duan L."/>
            <person name="Rahardjo A.P."/>
            <person name="Puthavathana P."/>
            <person name="Buranathai C."/>
            <person name="Nguyen T.D."/>
            <person name="Estoepangestie A.T.S."/>
            <person name="Chaisingh A."/>
            <person name="Auewarakul P."/>
            <person name="Long H.T."/>
            <person name="Hanh N.T.H."/>
            <person name="Webby R.J."/>
            <person name="Poon L.L.M."/>
            <person name="Chen H."/>
            <person name="Shortridge K.F."/>
            <person name="Yuen K.Y."/>
            <person name="Webster R.G."/>
            <person name="Peiris J.S.M."/>
        </authorList>
    </citation>
    <scope>NUCLEOTIDE SEQUENCE [GENOMIC RNA]</scope>
</reference>
<protein>
    <recommendedName>
        <fullName>Matrix protein 2</fullName>
    </recommendedName>
    <alternativeName>
        <fullName>Proton channel protein M2</fullName>
    </alternativeName>
</protein>
<comment type="function">
    <text evidence="1">Forms a proton-selective ion channel that is necessary for the efficient release of the viral genome during virus entry. After attaching to the cell surface, the virion enters the cell by endocytosis. Acidification of the endosome triggers M2 ion channel activity. The influx of protons into virion interior is believed to disrupt interactions between the viral ribonucleoprotein (RNP), matrix protein 1 (M1), and lipid bilayers, thereby freeing the viral genome from interaction with viral proteins and enabling RNA segments to migrate to the host cell nucleus, where influenza virus RNA transcription and replication occur. Also plays a role in viral proteins secretory pathway. Elevates the intravesicular pH of normally acidic compartments, such as trans-Golgi network, preventing newly formed hemagglutinin from premature switching to the fusion-active conformation (By similarity).</text>
</comment>
<comment type="activity regulation">
    <text>The M2 protein from most influenza A strains is inhibited by amantadine and rimantadine, resulting in viral uncoating incapacity. Emergence of amantadine-resistant variants is usually rapid.</text>
</comment>
<comment type="subunit">
    <text evidence="1">Homotetramer; composed of two disulfide-linked dimers held together by non-covalent interactions (By similarity). May interact with matrix protein 1.</text>
</comment>
<comment type="subcellular location">
    <subcellularLocation>
        <location>Virion membrane</location>
    </subcellularLocation>
    <subcellularLocation>
        <location>Host apical cell membrane</location>
        <topology>Single-pass type III membrane protein</topology>
    </subcellularLocation>
    <text evidence="1">Abundantly expressed at the apical plasma membrane in infected polarized epithelial cells, in close proximity to budding and assembled virions. Minor component of virions (only 16-20 molecules/virion) (By similarity).</text>
</comment>
<comment type="alternative products">
    <event type="alternative splicing"/>
    <isoform>
        <id>Q6DPU3-1</id>
        <name>M2</name>
        <sequence type="displayed"/>
    </isoform>
    <isoform>
        <id>Q6DPU2-1</id>
        <name>M1</name>
        <sequence type="external"/>
    </isoform>
    <text>Only the first 9 residues are shared by the 2 isoforms.</text>
</comment>
<comment type="domain">
    <text evidence="1">Cytoplasmic tail plays an important role in virion assembly and morphogenesis.</text>
</comment>
<comment type="miscellaneous">
    <text>When the channel is activated, one or more imidazole moieties of His-30 probably become bi-protonated.</text>
</comment>
<comment type="similarity">
    <text evidence="4">Belongs to the influenza viruses matrix protein M2 family.</text>
</comment>
<accession>Q6DPU3</accession>
<proteinExistence type="inferred from homology"/>
<gene>
    <name type="primary">M</name>
</gene>
<evidence type="ECO:0000250" key="1"/>
<evidence type="ECO:0000255" key="2"/>
<evidence type="ECO:0000256" key="3">
    <source>
        <dbReference type="SAM" id="MobiDB-lite"/>
    </source>
</evidence>
<evidence type="ECO:0000305" key="4"/>
<sequence>ETPTRTGWECKCSDSSDPLVVAASIIGILHLILWILDRLFFKCIYRRLKYGLKRGPSTGGVPESMREEYRQEQQSAVDVDDGHFVNIELE</sequence>
<dbReference type="EMBL" id="AY651399">
    <property type="protein sequence ID" value="AAT70550.1"/>
    <property type="molecule type" value="Genomic_RNA"/>
</dbReference>
<dbReference type="SMR" id="Q6DPU3"/>
<dbReference type="GO" id="GO:0020002">
    <property type="term" value="C:host cell plasma membrane"/>
    <property type="evidence" value="ECO:0007669"/>
    <property type="project" value="UniProtKB-SubCell"/>
</dbReference>
<dbReference type="GO" id="GO:0016020">
    <property type="term" value="C:membrane"/>
    <property type="evidence" value="ECO:0007669"/>
    <property type="project" value="UniProtKB-KW"/>
</dbReference>
<dbReference type="GO" id="GO:0055036">
    <property type="term" value="C:virion membrane"/>
    <property type="evidence" value="ECO:0007669"/>
    <property type="project" value="UniProtKB-SubCell"/>
</dbReference>
<dbReference type="GO" id="GO:0015267">
    <property type="term" value="F:channel activity"/>
    <property type="evidence" value="ECO:0007669"/>
    <property type="project" value="UniProtKB-KW"/>
</dbReference>
<dbReference type="GO" id="GO:0015078">
    <property type="term" value="F:proton transmembrane transporter activity"/>
    <property type="evidence" value="ECO:0007669"/>
    <property type="project" value="InterPro"/>
</dbReference>
<dbReference type="Gene3D" id="6.10.250.1640">
    <property type="match status" value="1"/>
</dbReference>
<dbReference type="InterPro" id="IPR002089">
    <property type="entry name" value="Flu_M2"/>
</dbReference>
<dbReference type="Pfam" id="PF00599">
    <property type="entry name" value="Flu_M2"/>
    <property type="match status" value="1"/>
</dbReference>
<name>M2_I02A1</name>
<organismHost>
    <name type="scientific">Aves</name>
    <dbReference type="NCBI Taxonomy" id="8782"/>
</organismHost>
<organismHost>
    <name type="scientific">Felis catus</name>
    <name type="common">Cat</name>
    <name type="synonym">Felis silvestris catus</name>
    <dbReference type="NCBI Taxonomy" id="9685"/>
</organismHost>
<organismHost>
    <name type="scientific">Homo sapiens</name>
    <name type="common">Human</name>
    <dbReference type="NCBI Taxonomy" id="9606"/>
</organismHost>
<organismHost>
    <name type="scientific">Panthera pardus</name>
    <name type="common">Leopard</name>
    <name type="synonym">Felis pardus</name>
    <dbReference type="NCBI Taxonomy" id="9691"/>
</organismHost>
<organismHost>
    <name type="scientific">Panthera tigris</name>
    <name type="common">Tiger</name>
    <dbReference type="NCBI Taxonomy" id="9694"/>
</organismHost>
<organismHost>
    <name type="scientific">Sus scrofa</name>
    <name type="common">Pig</name>
    <dbReference type="NCBI Taxonomy" id="9823"/>
</organismHost>
<feature type="chain" id="PRO_0000311626" description="Matrix protein 2">
    <location>
        <begin position="1" status="less than"/>
        <end position="90"/>
    </location>
</feature>
<feature type="topological domain" description="Virion surface" evidence="2">
    <location>
        <begin position="1" status="less than"/>
        <end position="15"/>
    </location>
</feature>
<feature type="transmembrane region" description="Helical" evidence="2">
    <location>
        <begin position="16"/>
        <end position="36"/>
    </location>
</feature>
<feature type="topological domain" description="Intravirion" evidence="2">
    <location>
        <begin position="37"/>
        <end position="90"/>
    </location>
</feature>
<feature type="region of interest" description="Disordered" evidence="3">
    <location>
        <begin position="53"/>
        <end position="76"/>
    </location>
</feature>
<feature type="site" description="Essential for channel activity, seems to be protonated during channel activation, and may play a role in the channel gating and selectivity" evidence="1">
    <location>
        <position position="30"/>
    </location>
</feature>
<feature type="site" description="Seems to be involved in pH gating" evidence="1">
    <location>
        <position position="34"/>
    </location>
</feature>
<feature type="modified residue" description="Phosphoserine; by host" evidence="1">
    <location>
        <position position="57"/>
    </location>
</feature>
<feature type="lipid moiety-binding region" description="S-palmitoyl cysteine; by host" evidence="1">
    <location>
        <position position="43"/>
    </location>
</feature>
<feature type="disulfide bond" description="Interchain (with C-17)" evidence="1">
    <location>
        <position position="10"/>
    </location>
</feature>
<feature type="disulfide bond" description="Interchain (with C-19)" evidence="1">
    <location>
        <position position="12"/>
    </location>
</feature>
<feature type="non-terminal residue">
    <location>
        <position position="1"/>
    </location>
</feature>
<keyword id="KW-0025">Alternative splicing</keyword>
<keyword id="KW-1015">Disulfide bond</keyword>
<keyword id="KW-1032">Host cell membrane</keyword>
<keyword id="KW-1043">Host membrane</keyword>
<keyword id="KW-0375">Hydrogen ion transport</keyword>
<keyword id="KW-0407">Ion channel</keyword>
<keyword id="KW-0406">Ion transport</keyword>
<keyword id="KW-0449">Lipoprotein</keyword>
<keyword id="KW-0472">Membrane</keyword>
<keyword id="KW-0564">Palmitate</keyword>
<keyword id="KW-0597">Phosphoprotein</keyword>
<keyword id="KW-0735">Signal-anchor</keyword>
<keyword id="KW-0812">Transmembrane</keyword>
<keyword id="KW-1133">Transmembrane helix</keyword>
<keyword id="KW-0813">Transport</keyword>
<keyword id="KW-1182">Viral ion channel</keyword>
<keyword id="KW-0946">Virion</keyword>